<comment type="function">
    <text evidence="1">Required for assembly of smooth septate junctions (sSJs). May be important for barrier function of the midgut epithelium.</text>
</comment>
<comment type="subcellular location">
    <subcellularLocation>
        <location evidence="3">Apicolateral cell membrane</location>
        <topology evidence="2">Multi-pass membrane protein</topology>
    </subcellularLocation>
    <subcellularLocation>
        <location evidence="1">Cell junction</location>
        <location evidence="1">Septate junction</location>
    </subcellularLocation>
    <text evidence="1">Specific to smooth septate junctions.</text>
</comment>
<comment type="tissue specificity">
    <text evidence="3">Expressed in midgut epithelium (at protein level).</text>
</comment>
<comment type="sequence caution" evidence="5">
    <conflict type="erroneous gene model prediction">
        <sequence resource="EMBL" id="BABH01015024"/>
    </conflict>
</comment>
<organism evidence="6">
    <name type="scientific">Bombyx mori</name>
    <name type="common">Silk moth</name>
    <dbReference type="NCBI Taxonomy" id="7091"/>
    <lineage>
        <taxon>Eukaryota</taxon>
        <taxon>Metazoa</taxon>
        <taxon>Ecdysozoa</taxon>
        <taxon>Arthropoda</taxon>
        <taxon>Hexapoda</taxon>
        <taxon>Insecta</taxon>
        <taxon>Pterygota</taxon>
        <taxon>Neoptera</taxon>
        <taxon>Endopterygota</taxon>
        <taxon>Lepidoptera</taxon>
        <taxon>Glossata</taxon>
        <taxon>Ditrysia</taxon>
        <taxon>Bombycoidea</taxon>
        <taxon>Bombycidae</taxon>
        <taxon>Bombycinae</taxon>
        <taxon>Bombyx</taxon>
    </lineage>
</organism>
<name>SSK_BOMMO</name>
<reference evidence="5" key="1">
    <citation type="journal article" date="2012" name="J. Cell Sci.">
        <title>Snakeskin, a membrane protein associated with smooth septate junctions, is required for intestinal barrier function in Drosophila.</title>
        <authorList>
            <person name="Yanagihashi Y."/>
            <person name="Usui T."/>
            <person name="Izumi Y."/>
            <person name="Yonemura S."/>
            <person name="Sumida M."/>
            <person name="Tsukita S."/>
            <person name="Uemura T."/>
            <person name="Furuse M."/>
        </authorList>
    </citation>
    <scope>NUCLEOTIDE SEQUENCE [MRNA]</scope>
    <scope>PROTEIN SEQUENCE OF 2-27</scope>
    <scope>SUBCELLULAR LOCATION</scope>
    <scope>TISSUE SPECIFICITY</scope>
    <source>
        <tissue evidence="4">Midgut</tissue>
    </source>
</reference>
<reference evidence="6" key="2">
    <citation type="journal article" date="2004" name="Science">
        <title>A draft sequence for the genome of the domesticated silkworm (Bombyx mori).</title>
        <authorList>
            <person name="Xia Q."/>
            <person name="Zhou Z."/>
            <person name="Lu C."/>
            <person name="Cheng D."/>
            <person name="Dai F."/>
            <person name="Li B."/>
            <person name="Zhao P."/>
            <person name="Zha X."/>
            <person name="Cheng T."/>
            <person name="Chai C."/>
            <person name="Pan G."/>
            <person name="Xu J."/>
            <person name="Liu C."/>
            <person name="Lin Y."/>
            <person name="Qian J."/>
            <person name="Hou Y."/>
            <person name="Wu Z."/>
            <person name="Li G."/>
            <person name="Pan M."/>
            <person name="Li C."/>
            <person name="Shen Y."/>
            <person name="Lan X."/>
            <person name="Yuan L."/>
            <person name="Li T."/>
            <person name="Xu H."/>
            <person name="Yang G."/>
            <person name="Wan Y."/>
            <person name="Zhu Y."/>
            <person name="Yu M."/>
            <person name="Shen W."/>
            <person name="Wu D."/>
            <person name="Xiang Z."/>
            <person name="Yu J."/>
            <person name="Wang J."/>
            <person name="Li R."/>
            <person name="Shi J."/>
            <person name="Li H."/>
            <person name="Li G."/>
            <person name="Su J."/>
            <person name="Wang X."/>
            <person name="Li G."/>
            <person name="Zhang Z."/>
            <person name="Wu Q."/>
            <person name="Li J."/>
            <person name="Zhang Q."/>
            <person name="Wei N."/>
            <person name="Xu J."/>
            <person name="Sun H."/>
            <person name="Dong L."/>
            <person name="Liu D."/>
            <person name="Zhao S."/>
            <person name="Zhao X."/>
            <person name="Meng Q."/>
            <person name="Lan F."/>
            <person name="Huang X."/>
            <person name="Li Y."/>
            <person name="Fang L."/>
            <person name="Li C."/>
            <person name="Li D."/>
            <person name="Sun Y."/>
            <person name="Zhang Z."/>
            <person name="Yang Z."/>
            <person name="Huang Y."/>
            <person name="Xi Y."/>
            <person name="Qi Q."/>
            <person name="He D."/>
            <person name="Huang H."/>
            <person name="Zhang X."/>
            <person name="Wang Z."/>
            <person name="Li W."/>
            <person name="Cao Y."/>
            <person name="Yu Y."/>
            <person name="Yu H."/>
            <person name="Li J."/>
            <person name="Ye J."/>
            <person name="Chen H."/>
            <person name="Zhou Y."/>
            <person name="Liu B."/>
            <person name="Wang J."/>
            <person name="Ye J."/>
            <person name="Ji H."/>
            <person name="Li S."/>
            <person name="Ni P."/>
            <person name="Zhang J."/>
            <person name="Zhang Y."/>
            <person name="Zheng H."/>
            <person name="Mao B."/>
            <person name="Wang W."/>
            <person name="Ye C."/>
            <person name="Li S."/>
            <person name="Wang J."/>
            <person name="Wong G.K.-S."/>
            <person name="Yang H."/>
        </authorList>
    </citation>
    <scope>NUCLEOTIDE SEQUENCE [LARGE SCALE GENOMIC DNA]</scope>
    <source>
        <strain evidence="6">p50T</strain>
    </source>
</reference>
<accession>H9JBU5</accession>
<proteinExistence type="evidence at protein level"/>
<keyword id="KW-0965">Cell junction</keyword>
<keyword id="KW-1003">Cell membrane</keyword>
<keyword id="KW-0903">Direct protein sequencing</keyword>
<keyword id="KW-0472">Membrane</keyword>
<keyword id="KW-1185">Reference proteome</keyword>
<keyword id="KW-0812">Transmembrane</keyword>
<keyword id="KW-1133">Transmembrane helix</keyword>
<dbReference type="EMBL" id="BABH01015024">
    <property type="status" value="NOT_ANNOTATED_CDS"/>
    <property type="molecule type" value="Genomic_DNA"/>
</dbReference>
<dbReference type="FunCoup" id="H9JBU5">
    <property type="interactions" value="4"/>
</dbReference>
<dbReference type="STRING" id="7091.H9JBU5"/>
<dbReference type="PaxDb" id="7091-BGIBMGA006990-TA"/>
<dbReference type="eggNOG" id="ENOG502RZZJ">
    <property type="taxonomic scope" value="Eukaryota"/>
</dbReference>
<dbReference type="HOGENOM" id="CLU_130085_0_0_1"/>
<dbReference type="InParanoid" id="H9JBU5"/>
<dbReference type="Proteomes" id="UP000005204">
    <property type="component" value="Unassembled WGS sequence"/>
</dbReference>
<dbReference type="GO" id="GO:0016327">
    <property type="term" value="C:apicolateral plasma membrane"/>
    <property type="evidence" value="ECO:0000314"/>
    <property type="project" value="UniProtKB"/>
</dbReference>
<dbReference type="GO" id="GO:0005918">
    <property type="term" value="C:septate junction"/>
    <property type="evidence" value="ECO:0007669"/>
    <property type="project" value="UniProtKB-SubCell"/>
</dbReference>
<dbReference type="GO" id="GO:0019991">
    <property type="term" value="P:septate junction assembly"/>
    <property type="evidence" value="ECO:0007669"/>
    <property type="project" value="InterPro"/>
</dbReference>
<dbReference type="InterPro" id="IPR038976">
    <property type="entry name" value="Ssk"/>
</dbReference>
<dbReference type="PANTHER" id="PTHR36692">
    <property type="entry name" value="PROTEIN SNAKESKIN"/>
    <property type="match status" value="1"/>
</dbReference>
<dbReference type="PANTHER" id="PTHR36692:SF3">
    <property type="entry name" value="PROTEIN SNAKESKIN"/>
    <property type="match status" value="1"/>
</dbReference>
<protein>
    <recommendedName>
        <fullName evidence="1">Protein snakeskin</fullName>
    </recommendedName>
</protein>
<evidence type="ECO:0000250" key="1">
    <source>
        <dbReference type="UniProtKB" id="Q9VW87"/>
    </source>
</evidence>
<evidence type="ECO:0000255" key="2"/>
<evidence type="ECO:0000269" key="3">
    <source>
    </source>
</evidence>
<evidence type="ECO:0000303" key="4">
    <source>
    </source>
</evidence>
<evidence type="ECO:0000305" key="5"/>
<evidence type="ECO:0000312" key="6">
    <source>
        <dbReference type="Proteomes" id="UP000005204"/>
    </source>
</evidence>
<sequence length="157" mass="17289">MVSVQTIATIVVKTFKIVLNIIILVLYRTGYNGEFLGVGGTWNLNEEKNPDAEIVASGVIVGYLIYTLVQIVTFLFGTTEHKRALSEIVMNFVGVFLWIAVGAVALHYWGGYQGEHQFQFVFAEKQVGLAVGALCVINGAIYLLDTALSVIHFTKEM</sequence>
<feature type="initiator methionine" description="Removed" evidence="3">
    <location>
        <position position="1"/>
    </location>
</feature>
<feature type="chain" id="PRO_0000437456" description="Protein snakeskin">
    <location>
        <begin position="2"/>
        <end position="157"/>
    </location>
</feature>
<feature type="topological domain" description="Cytoplasmic" evidence="1">
    <location>
        <begin position="2"/>
        <end position="6"/>
    </location>
</feature>
<feature type="transmembrane region" description="Helical" evidence="2">
    <location>
        <begin position="7"/>
        <end position="27"/>
    </location>
</feature>
<feature type="topological domain" description="Extracellular" evidence="1">
    <location>
        <begin position="28"/>
        <end position="53"/>
    </location>
</feature>
<feature type="transmembrane region" description="Helical" evidence="2">
    <location>
        <begin position="54"/>
        <end position="74"/>
    </location>
</feature>
<feature type="topological domain" description="Cytoplasmic" evidence="1">
    <location>
        <begin position="75"/>
        <end position="87"/>
    </location>
</feature>
<feature type="transmembrane region" description="Helical" evidence="2">
    <location>
        <begin position="88"/>
        <end position="108"/>
    </location>
</feature>
<feature type="topological domain" description="Extracellular" evidence="1">
    <location>
        <begin position="109"/>
        <end position="130"/>
    </location>
</feature>
<feature type="transmembrane region" description="Helical" evidence="2">
    <location>
        <begin position="131"/>
        <end position="151"/>
    </location>
</feature>
<feature type="topological domain" description="Cytoplasmic" evidence="1">
    <location>
        <begin position="152"/>
        <end position="157"/>
    </location>
</feature>